<feature type="chain" id="PRO_0000303687" description="Exodeoxyribonuclease 7 small subunit">
    <location>
        <begin position="1"/>
        <end position="76"/>
    </location>
</feature>
<accession>A0JYU5</accession>
<protein>
    <recommendedName>
        <fullName evidence="1">Exodeoxyribonuclease 7 small subunit</fullName>
        <ecNumber evidence="1">3.1.11.6</ecNumber>
    </recommendedName>
    <alternativeName>
        <fullName evidence="1">Exodeoxyribonuclease VII small subunit</fullName>
        <shortName evidence="1">Exonuclease VII small subunit</shortName>
    </alternativeName>
</protein>
<evidence type="ECO:0000255" key="1">
    <source>
        <dbReference type="HAMAP-Rule" id="MF_00337"/>
    </source>
</evidence>
<comment type="function">
    <text evidence="1">Bidirectionally degrades single-stranded DNA into large acid-insoluble oligonucleotides, which are then degraded further into small acid-soluble oligonucleotides.</text>
</comment>
<comment type="catalytic activity">
    <reaction evidence="1">
        <text>Exonucleolytic cleavage in either 5'- to 3'- or 3'- to 5'-direction to yield nucleoside 5'-phosphates.</text>
        <dbReference type="EC" id="3.1.11.6"/>
    </reaction>
</comment>
<comment type="subunit">
    <text evidence="1">Heterooligomer composed of large and small subunits.</text>
</comment>
<comment type="subcellular location">
    <subcellularLocation>
        <location evidence="1">Cytoplasm</location>
    </subcellularLocation>
</comment>
<comment type="similarity">
    <text evidence="1">Belongs to the XseB family.</text>
</comment>
<proteinExistence type="inferred from homology"/>
<reference key="1">
    <citation type="journal article" date="2013" name="Stand. Genomic Sci.">
        <title>Complete genome sequence of Arthrobacter sp. strain FB24.</title>
        <authorList>
            <person name="Nakatsu C.H."/>
            <person name="Barabote R."/>
            <person name="Thompson S."/>
            <person name="Bruce D."/>
            <person name="Detter C."/>
            <person name="Brettin T."/>
            <person name="Han C."/>
            <person name="Beasley F."/>
            <person name="Chen W."/>
            <person name="Konopka A."/>
            <person name="Xie G."/>
        </authorList>
    </citation>
    <scope>NUCLEOTIDE SEQUENCE [LARGE SCALE GENOMIC DNA]</scope>
    <source>
        <strain>FB24</strain>
    </source>
</reference>
<gene>
    <name evidence="1" type="primary">xseB</name>
    <name type="ordered locus">Arth_2836</name>
</gene>
<name>EX7S_ARTS2</name>
<dbReference type="EC" id="3.1.11.6" evidence="1"/>
<dbReference type="EMBL" id="CP000454">
    <property type="protein sequence ID" value="ABK04215.1"/>
    <property type="molecule type" value="Genomic_DNA"/>
</dbReference>
<dbReference type="RefSeq" id="WP_011692675.1">
    <property type="nucleotide sequence ID" value="NC_008541.1"/>
</dbReference>
<dbReference type="SMR" id="A0JYU5"/>
<dbReference type="STRING" id="290399.Arth_2836"/>
<dbReference type="KEGG" id="art:Arth_2836"/>
<dbReference type="eggNOG" id="COG1722">
    <property type="taxonomic scope" value="Bacteria"/>
</dbReference>
<dbReference type="HOGENOM" id="CLU_145918_0_2_11"/>
<dbReference type="OrthoDB" id="5244334at2"/>
<dbReference type="Proteomes" id="UP000000754">
    <property type="component" value="Chromosome"/>
</dbReference>
<dbReference type="GO" id="GO:0005829">
    <property type="term" value="C:cytosol"/>
    <property type="evidence" value="ECO:0007669"/>
    <property type="project" value="TreeGrafter"/>
</dbReference>
<dbReference type="GO" id="GO:0009318">
    <property type="term" value="C:exodeoxyribonuclease VII complex"/>
    <property type="evidence" value="ECO:0007669"/>
    <property type="project" value="InterPro"/>
</dbReference>
<dbReference type="GO" id="GO:0008855">
    <property type="term" value="F:exodeoxyribonuclease VII activity"/>
    <property type="evidence" value="ECO:0007669"/>
    <property type="project" value="UniProtKB-UniRule"/>
</dbReference>
<dbReference type="GO" id="GO:0006308">
    <property type="term" value="P:DNA catabolic process"/>
    <property type="evidence" value="ECO:0007669"/>
    <property type="project" value="UniProtKB-UniRule"/>
</dbReference>
<dbReference type="Gene3D" id="1.10.287.1040">
    <property type="entry name" value="Exonuclease VII, small subunit"/>
    <property type="match status" value="1"/>
</dbReference>
<dbReference type="HAMAP" id="MF_00337">
    <property type="entry name" value="Exonuc_7_S"/>
    <property type="match status" value="1"/>
</dbReference>
<dbReference type="InterPro" id="IPR003761">
    <property type="entry name" value="Exonuc_VII_S"/>
</dbReference>
<dbReference type="InterPro" id="IPR037004">
    <property type="entry name" value="Exonuc_VII_ssu_sf"/>
</dbReference>
<dbReference type="NCBIfam" id="NF002139">
    <property type="entry name" value="PRK00977.1-3"/>
    <property type="match status" value="1"/>
</dbReference>
<dbReference type="NCBIfam" id="TIGR01280">
    <property type="entry name" value="xseB"/>
    <property type="match status" value="1"/>
</dbReference>
<dbReference type="PANTHER" id="PTHR34137">
    <property type="entry name" value="EXODEOXYRIBONUCLEASE 7 SMALL SUBUNIT"/>
    <property type="match status" value="1"/>
</dbReference>
<dbReference type="PANTHER" id="PTHR34137:SF1">
    <property type="entry name" value="EXODEOXYRIBONUCLEASE 7 SMALL SUBUNIT"/>
    <property type="match status" value="1"/>
</dbReference>
<dbReference type="Pfam" id="PF02609">
    <property type="entry name" value="Exonuc_VII_S"/>
    <property type="match status" value="1"/>
</dbReference>
<dbReference type="SUPFAM" id="SSF116842">
    <property type="entry name" value="XseB-like"/>
    <property type="match status" value="1"/>
</dbReference>
<organism>
    <name type="scientific">Arthrobacter sp. (strain FB24)</name>
    <dbReference type="NCBI Taxonomy" id="290399"/>
    <lineage>
        <taxon>Bacteria</taxon>
        <taxon>Bacillati</taxon>
        <taxon>Actinomycetota</taxon>
        <taxon>Actinomycetes</taxon>
        <taxon>Micrococcales</taxon>
        <taxon>Micrococcaceae</taxon>
        <taxon>Arthrobacter</taxon>
    </lineage>
</organism>
<keyword id="KW-0963">Cytoplasm</keyword>
<keyword id="KW-0269">Exonuclease</keyword>
<keyword id="KW-0378">Hydrolase</keyword>
<keyword id="KW-0540">Nuclease</keyword>
<keyword id="KW-1185">Reference proteome</keyword>
<sequence>MAAEHNPNADIEALSYEEAREQLVAVVGKLEAGGASLEDSLALWERGEALARRCEEWLEGARKRLAAARNQAGPES</sequence>